<dbReference type="EC" id="3.6.1.23" evidence="1"/>
<dbReference type="EMBL" id="CP001052">
    <property type="protein sequence ID" value="ACD17555.1"/>
    <property type="molecule type" value="Genomic_DNA"/>
</dbReference>
<dbReference type="RefSeq" id="WP_012434127.1">
    <property type="nucleotide sequence ID" value="NC_010681.1"/>
</dbReference>
<dbReference type="SMR" id="B2T6J1"/>
<dbReference type="STRING" id="398527.Bphyt_3163"/>
<dbReference type="KEGG" id="bpy:Bphyt_3163"/>
<dbReference type="eggNOG" id="COG0756">
    <property type="taxonomic scope" value="Bacteria"/>
</dbReference>
<dbReference type="HOGENOM" id="CLU_068508_1_1_4"/>
<dbReference type="OrthoDB" id="9809956at2"/>
<dbReference type="UniPathway" id="UPA00610">
    <property type="reaction ID" value="UER00666"/>
</dbReference>
<dbReference type="Proteomes" id="UP000001739">
    <property type="component" value="Chromosome 1"/>
</dbReference>
<dbReference type="GO" id="GO:0004170">
    <property type="term" value="F:dUTP diphosphatase activity"/>
    <property type="evidence" value="ECO:0007669"/>
    <property type="project" value="UniProtKB-UniRule"/>
</dbReference>
<dbReference type="GO" id="GO:0000287">
    <property type="term" value="F:magnesium ion binding"/>
    <property type="evidence" value="ECO:0007669"/>
    <property type="project" value="UniProtKB-UniRule"/>
</dbReference>
<dbReference type="GO" id="GO:0006226">
    <property type="term" value="P:dUMP biosynthetic process"/>
    <property type="evidence" value="ECO:0007669"/>
    <property type="project" value="UniProtKB-UniRule"/>
</dbReference>
<dbReference type="GO" id="GO:0046081">
    <property type="term" value="P:dUTP catabolic process"/>
    <property type="evidence" value="ECO:0007669"/>
    <property type="project" value="InterPro"/>
</dbReference>
<dbReference type="CDD" id="cd07557">
    <property type="entry name" value="trimeric_dUTPase"/>
    <property type="match status" value="1"/>
</dbReference>
<dbReference type="FunFam" id="2.70.40.10:FF:000002">
    <property type="entry name" value="dUTP diphosphatase"/>
    <property type="match status" value="1"/>
</dbReference>
<dbReference type="Gene3D" id="2.70.40.10">
    <property type="match status" value="1"/>
</dbReference>
<dbReference type="HAMAP" id="MF_00116">
    <property type="entry name" value="dUTPase_bact"/>
    <property type="match status" value="1"/>
</dbReference>
<dbReference type="InterPro" id="IPR008181">
    <property type="entry name" value="dUTPase"/>
</dbReference>
<dbReference type="InterPro" id="IPR029054">
    <property type="entry name" value="dUTPase-like"/>
</dbReference>
<dbReference type="InterPro" id="IPR036157">
    <property type="entry name" value="dUTPase-like_sf"/>
</dbReference>
<dbReference type="InterPro" id="IPR033704">
    <property type="entry name" value="dUTPase_trimeric"/>
</dbReference>
<dbReference type="NCBIfam" id="TIGR00576">
    <property type="entry name" value="dut"/>
    <property type="match status" value="1"/>
</dbReference>
<dbReference type="NCBIfam" id="NF001862">
    <property type="entry name" value="PRK00601.1"/>
    <property type="match status" value="1"/>
</dbReference>
<dbReference type="PANTHER" id="PTHR11241">
    <property type="entry name" value="DEOXYURIDINE 5'-TRIPHOSPHATE NUCLEOTIDOHYDROLASE"/>
    <property type="match status" value="1"/>
</dbReference>
<dbReference type="PANTHER" id="PTHR11241:SF0">
    <property type="entry name" value="DEOXYURIDINE 5'-TRIPHOSPHATE NUCLEOTIDOHYDROLASE"/>
    <property type="match status" value="1"/>
</dbReference>
<dbReference type="Pfam" id="PF00692">
    <property type="entry name" value="dUTPase"/>
    <property type="match status" value="1"/>
</dbReference>
<dbReference type="SUPFAM" id="SSF51283">
    <property type="entry name" value="dUTPase-like"/>
    <property type="match status" value="1"/>
</dbReference>
<gene>
    <name evidence="1" type="primary">dut</name>
    <name type="ordered locus">Bphyt_3163</name>
</gene>
<name>DUT_PARPJ</name>
<sequence length="148" mass="15742">MKLDLKILDARMRDQLPAYATTGSAGLDLRACLDEALTLKPGETALVPTGLAIHVGDAGYAALILPRSGLGHKHGIVLGNLVGLIDSDYQGQLMISTWNRGETTFVLNPMERLAQLVIVPVVQAEFNIVDDFETSDRGAGGFGSTGKH</sequence>
<comment type="function">
    <text evidence="1">This enzyme is involved in nucleotide metabolism: it produces dUMP, the immediate precursor of thymidine nucleotides and it decreases the intracellular concentration of dUTP so that uracil cannot be incorporated into DNA.</text>
</comment>
<comment type="catalytic activity">
    <reaction evidence="1">
        <text>dUTP + H2O = dUMP + diphosphate + H(+)</text>
        <dbReference type="Rhea" id="RHEA:10248"/>
        <dbReference type="ChEBI" id="CHEBI:15377"/>
        <dbReference type="ChEBI" id="CHEBI:15378"/>
        <dbReference type="ChEBI" id="CHEBI:33019"/>
        <dbReference type="ChEBI" id="CHEBI:61555"/>
        <dbReference type="ChEBI" id="CHEBI:246422"/>
        <dbReference type="EC" id="3.6.1.23"/>
    </reaction>
</comment>
<comment type="cofactor">
    <cofactor evidence="1">
        <name>Mg(2+)</name>
        <dbReference type="ChEBI" id="CHEBI:18420"/>
    </cofactor>
</comment>
<comment type="pathway">
    <text evidence="1">Pyrimidine metabolism; dUMP biosynthesis; dUMP from dCTP (dUTP route): step 2/2.</text>
</comment>
<comment type="similarity">
    <text evidence="1">Belongs to the dUTPase family.</text>
</comment>
<proteinExistence type="inferred from homology"/>
<feature type="chain" id="PRO_1000094949" description="Deoxyuridine 5'-triphosphate nucleotidohydrolase">
    <location>
        <begin position="1"/>
        <end position="148"/>
    </location>
</feature>
<feature type="binding site" evidence="1">
    <location>
        <begin position="67"/>
        <end position="69"/>
    </location>
    <ligand>
        <name>substrate</name>
    </ligand>
</feature>
<feature type="binding site" evidence="1">
    <location>
        <position position="80"/>
    </location>
    <ligand>
        <name>substrate</name>
    </ligand>
</feature>
<feature type="binding site" evidence="1">
    <location>
        <begin position="84"/>
        <end position="86"/>
    </location>
    <ligand>
        <name>substrate</name>
    </ligand>
</feature>
<feature type="binding site" evidence="1">
    <location>
        <position position="94"/>
    </location>
    <ligand>
        <name>substrate</name>
    </ligand>
</feature>
<accession>B2T6J1</accession>
<organism>
    <name type="scientific">Paraburkholderia phytofirmans (strain DSM 17436 / LMG 22146 / PsJN)</name>
    <name type="common">Burkholderia phytofirmans</name>
    <dbReference type="NCBI Taxonomy" id="398527"/>
    <lineage>
        <taxon>Bacteria</taxon>
        <taxon>Pseudomonadati</taxon>
        <taxon>Pseudomonadota</taxon>
        <taxon>Betaproteobacteria</taxon>
        <taxon>Burkholderiales</taxon>
        <taxon>Burkholderiaceae</taxon>
        <taxon>Paraburkholderia</taxon>
    </lineage>
</organism>
<protein>
    <recommendedName>
        <fullName evidence="1">Deoxyuridine 5'-triphosphate nucleotidohydrolase</fullName>
        <shortName evidence="1">dUTPase</shortName>
        <ecNumber evidence="1">3.6.1.23</ecNumber>
    </recommendedName>
    <alternativeName>
        <fullName evidence="1">dUTP pyrophosphatase</fullName>
    </alternativeName>
</protein>
<reference key="1">
    <citation type="journal article" date="2011" name="J. Bacteriol.">
        <title>Complete genome sequence of the plant growth-promoting endophyte Burkholderia phytofirmans strain PsJN.</title>
        <authorList>
            <person name="Weilharter A."/>
            <person name="Mitter B."/>
            <person name="Shin M.V."/>
            <person name="Chain P.S."/>
            <person name="Nowak J."/>
            <person name="Sessitsch A."/>
        </authorList>
    </citation>
    <scope>NUCLEOTIDE SEQUENCE [LARGE SCALE GENOMIC DNA]</scope>
    <source>
        <strain>DSM 17436 / LMG 22146 / PsJN</strain>
    </source>
</reference>
<evidence type="ECO:0000255" key="1">
    <source>
        <dbReference type="HAMAP-Rule" id="MF_00116"/>
    </source>
</evidence>
<keyword id="KW-0378">Hydrolase</keyword>
<keyword id="KW-0460">Magnesium</keyword>
<keyword id="KW-0479">Metal-binding</keyword>
<keyword id="KW-0546">Nucleotide metabolism</keyword>